<feature type="chain" id="PRO_1000189042" description="Cytochrome c-type biogenesis protein CcmE">
    <location>
        <begin position="1"/>
        <end position="151"/>
    </location>
</feature>
<feature type="topological domain" description="Cytoplasmic" evidence="1">
    <location>
        <begin position="1"/>
        <end position="8"/>
    </location>
</feature>
<feature type="transmembrane region" description="Helical; Signal-anchor for type II membrane protein" evidence="1">
    <location>
        <begin position="9"/>
        <end position="29"/>
    </location>
</feature>
<feature type="topological domain" description="Periplasmic" evidence="1">
    <location>
        <begin position="30"/>
        <end position="151"/>
    </location>
</feature>
<feature type="binding site" description="covalent" evidence="1">
    <location>
        <position position="124"/>
    </location>
    <ligand>
        <name>heme</name>
        <dbReference type="ChEBI" id="CHEBI:30413"/>
    </ligand>
</feature>
<feature type="binding site" description="axial binding residue" evidence="1">
    <location>
        <position position="128"/>
    </location>
    <ligand>
        <name>heme</name>
        <dbReference type="ChEBI" id="CHEBI:30413"/>
    </ligand>
    <ligandPart>
        <name>Fe</name>
        <dbReference type="ChEBI" id="CHEBI:18248"/>
    </ligandPart>
</feature>
<proteinExistence type="inferred from homology"/>
<keyword id="KW-0997">Cell inner membrane</keyword>
<keyword id="KW-1003">Cell membrane</keyword>
<keyword id="KW-0201">Cytochrome c-type biogenesis</keyword>
<keyword id="KW-0349">Heme</keyword>
<keyword id="KW-0408">Iron</keyword>
<keyword id="KW-0472">Membrane</keyword>
<keyword id="KW-0479">Metal-binding</keyword>
<keyword id="KW-0735">Signal-anchor</keyword>
<keyword id="KW-0812">Transmembrane</keyword>
<keyword id="KW-1133">Transmembrane helix</keyword>
<protein>
    <recommendedName>
        <fullName evidence="1">Cytochrome c-type biogenesis protein CcmE</fullName>
    </recommendedName>
    <alternativeName>
        <fullName evidence="1">Cytochrome c maturation protein E</fullName>
    </alternativeName>
    <alternativeName>
        <fullName evidence="1">Heme chaperone CcmE</fullName>
    </alternativeName>
</protein>
<reference key="1">
    <citation type="submission" date="2008-02" db="EMBL/GenBank/DDBJ databases">
        <title>Complete sequence of Pseudomonas putida W619.</title>
        <authorList>
            <person name="Copeland A."/>
            <person name="Lucas S."/>
            <person name="Lapidus A."/>
            <person name="Barry K."/>
            <person name="Detter J.C."/>
            <person name="Glavina del Rio T."/>
            <person name="Dalin E."/>
            <person name="Tice H."/>
            <person name="Pitluck S."/>
            <person name="Chain P."/>
            <person name="Malfatti S."/>
            <person name="Shin M."/>
            <person name="Vergez L."/>
            <person name="Schmutz J."/>
            <person name="Larimer F."/>
            <person name="Land M."/>
            <person name="Hauser L."/>
            <person name="Kyrpides N."/>
            <person name="Kim E."/>
            <person name="Taghavi S."/>
            <person name="Vangronsveld D."/>
            <person name="van der Lelie D."/>
            <person name="Richardson P."/>
        </authorList>
    </citation>
    <scope>NUCLEOTIDE SEQUENCE [LARGE SCALE GENOMIC DNA]</scope>
    <source>
        <strain>W619</strain>
    </source>
</reference>
<name>CCME_PSEPW</name>
<comment type="function">
    <text evidence="1">Heme chaperone required for the biogenesis of c-type cytochromes. Transiently binds heme delivered by CcmC and transfers the heme to apo-cytochromes in a process facilitated by CcmF and CcmH.</text>
</comment>
<comment type="subcellular location">
    <subcellularLocation>
        <location evidence="1">Cell inner membrane</location>
        <topology evidence="1">Single-pass type II membrane protein</topology>
        <orientation evidence="1">Periplasmic side</orientation>
    </subcellularLocation>
</comment>
<comment type="similarity">
    <text evidence="1">Belongs to the CcmE/CycJ family.</text>
</comment>
<organism>
    <name type="scientific">Pseudomonas putida (strain W619)</name>
    <dbReference type="NCBI Taxonomy" id="390235"/>
    <lineage>
        <taxon>Bacteria</taxon>
        <taxon>Pseudomonadati</taxon>
        <taxon>Pseudomonadota</taxon>
        <taxon>Gammaproteobacteria</taxon>
        <taxon>Pseudomonadales</taxon>
        <taxon>Pseudomonadaceae</taxon>
        <taxon>Pseudomonas</taxon>
    </lineage>
</organism>
<accession>B1JC48</accession>
<evidence type="ECO:0000255" key="1">
    <source>
        <dbReference type="HAMAP-Rule" id="MF_01959"/>
    </source>
</evidence>
<gene>
    <name evidence="1" type="primary">ccmE</name>
    <name evidence="1" type="synonym">cycJ</name>
    <name type="ordered locus">PputW619_3649</name>
</gene>
<dbReference type="EMBL" id="CP000949">
    <property type="protein sequence ID" value="ACA74131.1"/>
    <property type="molecule type" value="Genomic_DNA"/>
</dbReference>
<dbReference type="SMR" id="B1JC48"/>
<dbReference type="STRING" id="390235.PputW619_3649"/>
<dbReference type="KEGG" id="ppw:PputW619_3649"/>
<dbReference type="eggNOG" id="COG2332">
    <property type="taxonomic scope" value="Bacteria"/>
</dbReference>
<dbReference type="HOGENOM" id="CLU_079503_1_1_6"/>
<dbReference type="OrthoDB" id="9793584at2"/>
<dbReference type="GO" id="GO:0005886">
    <property type="term" value="C:plasma membrane"/>
    <property type="evidence" value="ECO:0007669"/>
    <property type="project" value="UniProtKB-SubCell"/>
</dbReference>
<dbReference type="GO" id="GO:0020037">
    <property type="term" value="F:heme binding"/>
    <property type="evidence" value="ECO:0007669"/>
    <property type="project" value="InterPro"/>
</dbReference>
<dbReference type="GO" id="GO:0046872">
    <property type="term" value="F:metal ion binding"/>
    <property type="evidence" value="ECO:0007669"/>
    <property type="project" value="UniProtKB-KW"/>
</dbReference>
<dbReference type="GO" id="GO:0017004">
    <property type="term" value="P:cytochrome complex assembly"/>
    <property type="evidence" value="ECO:0007669"/>
    <property type="project" value="UniProtKB-KW"/>
</dbReference>
<dbReference type="FunFam" id="2.40.50.140:FF:000104">
    <property type="entry name" value="Cytochrome c-type biogenesis protein CcmE"/>
    <property type="match status" value="1"/>
</dbReference>
<dbReference type="Gene3D" id="2.40.50.140">
    <property type="entry name" value="Nucleic acid-binding proteins"/>
    <property type="match status" value="1"/>
</dbReference>
<dbReference type="HAMAP" id="MF_01959">
    <property type="entry name" value="CcmE"/>
    <property type="match status" value="1"/>
</dbReference>
<dbReference type="InterPro" id="IPR004329">
    <property type="entry name" value="CcmE"/>
</dbReference>
<dbReference type="InterPro" id="IPR036127">
    <property type="entry name" value="CcmE-like_sf"/>
</dbReference>
<dbReference type="InterPro" id="IPR012340">
    <property type="entry name" value="NA-bd_OB-fold"/>
</dbReference>
<dbReference type="NCBIfam" id="NF009727">
    <property type="entry name" value="PRK13254.1-1"/>
    <property type="match status" value="1"/>
</dbReference>
<dbReference type="NCBIfam" id="NF009729">
    <property type="entry name" value="PRK13254.1-3"/>
    <property type="match status" value="1"/>
</dbReference>
<dbReference type="NCBIfam" id="NF009731">
    <property type="entry name" value="PRK13254.1-5"/>
    <property type="match status" value="1"/>
</dbReference>
<dbReference type="PANTHER" id="PTHR34128">
    <property type="entry name" value="CYTOCHROME C-TYPE BIOGENESIS PROTEIN CCME HOMOLOG, MITOCHONDRIAL"/>
    <property type="match status" value="1"/>
</dbReference>
<dbReference type="PANTHER" id="PTHR34128:SF2">
    <property type="entry name" value="CYTOCHROME C-TYPE BIOGENESIS PROTEIN CCME HOMOLOG, MITOCHONDRIAL"/>
    <property type="match status" value="1"/>
</dbReference>
<dbReference type="Pfam" id="PF03100">
    <property type="entry name" value="CcmE"/>
    <property type="match status" value="1"/>
</dbReference>
<dbReference type="SUPFAM" id="SSF82093">
    <property type="entry name" value="Heme chaperone CcmE"/>
    <property type="match status" value="1"/>
</dbReference>
<sequence length="151" mass="16163">MNPQRKKRLFLILGLLAGVAVAVGFALSALQQNINLFYTPTQIANGEAPLDTRIRAGGMVEKGSLQRSGDSLDVRFVVTDFNKSVPITYRGILPDLFREGQGIVALGKLNAEGVVVADEVLAKHDEKYMPPEVTKALKESGQAASGAEAKP</sequence>